<proteinExistence type="inferred from homology"/>
<organism>
    <name type="scientific">Herpetosiphon aurantiacus (strain ATCC 23779 / DSM 785 / 114-95)</name>
    <dbReference type="NCBI Taxonomy" id="316274"/>
    <lineage>
        <taxon>Bacteria</taxon>
        <taxon>Bacillati</taxon>
        <taxon>Chloroflexota</taxon>
        <taxon>Chloroflexia</taxon>
        <taxon>Herpetosiphonales</taxon>
        <taxon>Herpetosiphonaceae</taxon>
        <taxon>Herpetosiphon</taxon>
    </lineage>
</organism>
<accession>A9AZE8</accession>
<keyword id="KW-0963">Cytoplasm</keyword>
<keyword id="KW-0378">Hydrolase</keyword>
<dbReference type="EC" id="3.5.1.5" evidence="1"/>
<dbReference type="EMBL" id="CP000875">
    <property type="protein sequence ID" value="ABX05092.1"/>
    <property type="molecule type" value="Genomic_DNA"/>
</dbReference>
<dbReference type="SMR" id="A9AZE8"/>
<dbReference type="FunCoup" id="A9AZE8">
    <property type="interactions" value="56"/>
</dbReference>
<dbReference type="STRING" id="316274.Haur_2454"/>
<dbReference type="KEGG" id="hau:Haur_2454"/>
<dbReference type="eggNOG" id="COG0831">
    <property type="taxonomic scope" value="Bacteria"/>
</dbReference>
<dbReference type="HOGENOM" id="CLU_145825_1_0_0"/>
<dbReference type="InParanoid" id="A9AZE8"/>
<dbReference type="UniPathway" id="UPA00258">
    <property type="reaction ID" value="UER00370"/>
</dbReference>
<dbReference type="Proteomes" id="UP000000787">
    <property type="component" value="Chromosome"/>
</dbReference>
<dbReference type="GO" id="GO:0005737">
    <property type="term" value="C:cytoplasm"/>
    <property type="evidence" value="ECO:0007669"/>
    <property type="project" value="UniProtKB-SubCell"/>
</dbReference>
<dbReference type="GO" id="GO:0016151">
    <property type="term" value="F:nickel cation binding"/>
    <property type="evidence" value="ECO:0007669"/>
    <property type="project" value="InterPro"/>
</dbReference>
<dbReference type="GO" id="GO:0009039">
    <property type="term" value="F:urease activity"/>
    <property type="evidence" value="ECO:0007669"/>
    <property type="project" value="UniProtKB-UniRule"/>
</dbReference>
<dbReference type="GO" id="GO:0043419">
    <property type="term" value="P:urea catabolic process"/>
    <property type="evidence" value="ECO:0007669"/>
    <property type="project" value="UniProtKB-UniRule"/>
</dbReference>
<dbReference type="CDD" id="cd00390">
    <property type="entry name" value="Urease_gamma"/>
    <property type="match status" value="1"/>
</dbReference>
<dbReference type="Gene3D" id="3.30.280.10">
    <property type="entry name" value="Urease, gamma-like subunit"/>
    <property type="match status" value="1"/>
</dbReference>
<dbReference type="HAMAP" id="MF_00739">
    <property type="entry name" value="Urease_gamma"/>
    <property type="match status" value="1"/>
</dbReference>
<dbReference type="InterPro" id="IPR012010">
    <property type="entry name" value="Urease_gamma"/>
</dbReference>
<dbReference type="InterPro" id="IPR002026">
    <property type="entry name" value="Urease_gamma/gamma-beta_su"/>
</dbReference>
<dbReference type="InterPro" id="IPR036463">
    <property type="entry name" value="Urease_gamma_sf"/>
</dbReference>
<dbReference type="InterPro" id="IPR050069">
    <property type="entry name" value="Urease_subunit"/>
</dbReference>
<dbReference type="NCBIfam" id="NF009712">
    <property type="entry name" value="PRK13241.1"/>
    <property type="match status" value="1"/>
</dbReference>
<dbReference type="NCBIfam" id="TIGR00193">
    <property type="entry name" value="urease_gam"/>
    <property type="match status" value="1"/>
</dbReference>
<dbReference type="PANTHER" id="PTHR33569">
    <property type="entry name" value="UREASE"/>
    <property type="match status" value="1"/>
</dbReference>
<dbReference type="PANTHER" id="PTHR33569:SF1">
    <property type="entry name" value="UREASE"/>
    <property type="match status" value="1"/>
</dbReference>
<dbReference type="Pfam" id="PF00547">
    <property type="entry name" value="Urease_gamma"/>
    <property type="match status" value="1"/>
</dbReference>
<dbReference type="PIRSF" id="PIRSF001223">
    <property type="entry name" value="Urease_gamma"/>
    <property type="match status" value="1"/>
</dbReference>
<dbReference type="SUPFAM" id="SSF54111">
    <property type="entry name" value="Urease, gamma-subunit"/>
    <property type="match status" value="1"/>
</dbReference>
<evidence type="ECO:0000255" key="1">
    <source>
        <dbReference type="HAMAP-Rule" id="MF_00739"/>
    </source>
</evidence>
<gene>
    <name evidence="1" type="primary">ureA</name>
    <name type="ordered locus">Haur_2454</name>
</gene>
<sequence length="100" mass="11009">MHLTPREQEKLLIVVAADLARRRQARGLKLNYPEAVAIITAELLEAARDGKSVAEIMSYGTTILTVDDVMDGVANMIHEVQVEATFPDGTKLVTVHDPIR</sequence>
<protein>
    <recommendedName>
        <fullName evidence="1">Urease subunit gamma</fullName>
        <ecNumber evidence="1">3.5.1.5</ecNumber>
    </recommendedName>
    <alternativeName>
        <fullName evidence="1">Urea amidohydrolase subunit gamma</fullName>
    </alternativeName>
</protein>
<name>URE3_HERA2</name>
<comment type="catalytic activity">
    <reaction evidence="1">
        <text>urea + 2 H2O + H(+) = hydrogencarbonate + 2 NH4(+)</text>
        <dbReference type="Rhea" id="RHEA:20557"/>
        <dbReference type="ChEBI" id="CHEBI:15377"/>
        <dbReference type="ChEBI" id="CHEBI:15378"/>
        <dbReference type="ChEBI" id="CHEBI:16199"/>
        <dbReference type="ChEBI" id="CHEBI:17544"/>
        <dbReference type="ChEBI" id="CHEBI:28938"/>
        <dbReference type="EC" id="3.5.1.5"/>
    </reaction>
</comment>
<comment type="pathway">
    <text evidence="1">Nitrogen metabolism; urea degradation; CO(2) and NH(3) from urea (urease route): step 1/1.</text>
</comment>
<comment type="subunit">
    <text evidence="1">Heterotrimer of UreA (gamma), UreB (beta) and UreC (alpha) subunits. Three heterotrimers associate to form the active enzyme.</text>
</comment>
<comment type="subcellular location">
    <subcellularLocation>
        <location evidence="1">Cytoplasm</location>
    </subcellularLocation>
</comment>
<comment type="similarity">
    <text evidence="1">Belongs to the urease gamma subunit family.</text>
</comment>
<feature type="chain" id="PRO_1000199864" description="Urease subunit gamma">
    <location>
        <begin position="1"/>
        <end position="100"/>
    </location>
</feature>
<reference key="1">
    <citation type="journal article" date="2011" name="Stand. Genomic Sci.">
        <title>Complete genome sequence of the filamentous gliding predatory bacterium Herpetosiphon aurantiacus type strain (114-95(T)).</title>
        <authorList>
            <person name="Kiss H."/>
            <person name="Nett M."/>
            <person name="Domin N."/>
            <person name="Martin K."/>
            <person name="Maresca J.A."/>
            <person name="Copeland A."/>
            <person name="Lapidus A."/>
            <person name="Lucas S."/>
            <person name="Berry K.W."/>
            <person name="Glavina Del Rio T."/>
            <person name="Dalin E."/>
            <person name="Tice H."/>
            <person name="Pitluck S."/>
            <person name="Richardson P."/>
            <person name="Bruce D."/>
            <person name="Goodwin L."/>
            <person name="Han C."/>
            <person name="Detter J.C."/>
            <person name="Schmutz J."/>
            <person name="Brettin T."/>
            <person name="Land M."/>
            <person name="Hauser L."/>
            <person name="Kyrpides N.C."/>
            <person name="Ivanova N."/>
            <person name="Goeker M."/>
            <person name="Woyke T."/>
            <person name="Klenk H.P."/>
            <person name="Bryant D.A."/>
        </authorList>
    </citation>
    <scope>NUCLEOTIDE SEQUENCE [LARGE SCALE GENOMIC DNA]</scope>
    <source>
        <strain>ATCC 23779 / DSM 785 / 114-95</strain>
    </source>
</reference>